<organism>
    <name type="scientific">Thioalkalivibrio sulfidiphilus (strain HL-EbGR7)</name>
    <dbReference type="NCBI Taxonomy" id="396588"/>
    <lineage>
        <taxon>Bacteria</taxon>
        <taxon>Pseudomonadati</taxon>
        <taxon>Pseudomonadota</taxon>
        <taxon>Gammaproteobacteria</taxon>
        <taxon>Chromatiales</taxon>
        <taxon>Ectothiorhodospiraceae</taxon>
        <taxon>Thioalkalivibrio</taxon>
    </lineage>
</organism>
<comment type="function">
    <text evidence="1">Involved in peptide bond synthesis. Alleviates ribosome stalling that occurs when 3 or more consecutive Pro residues or the sequence PPG is present in a protein, possibly by augmenting the peptidyl transferase activity of the ribosome. Modification of Lys-34 is required for alleviation.</text>
</comment>
<comment type="pathway">
    <text evidence="1">Protein biosynthesis; polypeptide chain elongation.</text>
</comment>
<comment type="subcellular location">
    <subcellularLocation>
        <location evidence="1">Cytoplasm</location>
    </subcellularLocation>
</comment>
<comment type="PTM">
    <text evidence="1">May be beta-lysylated on the epsilon-amino group of Lys-34 by the combined action of EpmA and EpmB, and then hydroxylated on the C5 position of the same residue by EpmC (if this protein is present). Lysylation is critical for the stimulatory effect of EF-P on peptide-bond formation. The lysylation moiety may extend toward the peptidyltransferase center and stabilize the terminal 3-CCA end of the tRNA. Hydroxylation of the C5 position on Lys-34 may allow additional potential stabilizing hydrogen-bond interactions with the P-tRNA.</text>
</comment>
<comment type="similarity">
    <text evidence="1">Belongs to the elongation factor P family.</text>
</comment>
<accession>B8GQC3</accession>
<sequence length="187" mass="20600">MANYSTSEFKSGLKILMDGDPYAIIENEFVKPGKGQAFNRVKVRNLKTGRVLEKTFKSGDSVEAADVMDTNMQYLYTDGEFWHFMVPDTFEQHAAGEAAVADAIKWLKEQDMCVVTLWNGVPLAVSPPNFVELTITQCDPGVRGDTAQGGTKPATLETGAVVKVPLFVEEGEKVRVDTRTGEYVSRV</sequence>
<keyword id="KW-0963">Cytoplasm</keyword>
<keyword id="KW-0251">Elongation factor</keyword>
<keyword id="KW-0379">Hydroxylation</keyword>
<keyword id="KW-0648">Protein biosynthesis</keyword>
<keyword id="KW-1185">Reference proteome</keyword>
<reference key="1">
    <citation type="journal article" date="2011" name="Stand. Genomic Sci.">
        <title>Complete genome sequence of 'Thioalkalivibrio sulfidophilus' HL-EbGr7.</title>
        <authorList>
            <person name="Muyzer G."/>
            <person name="Sorokin D.Y."/>
            <person name="Mavromatis K."/>
            <person name="Lapidus A."/>
            <person name="Clum A."/>
            <person name="Ivanova N."/>
            <person name="Pati A."/>
            <person name="d'Haeseleer P."/>
            <person name="Woyke T."/>
            <person name="Kyrpides N.C."/>
        </authorList>
    </citation>
    <scope>NUCLEOTIDE SEQUENCE [LARGE SCALE GENOMIC DNA]</scope>
    <source>
        <strain>HL-EbGR7</strain>
    </source>
</reference>
<gene>
    <name evidence="1" type="primary">efp</name>
    <name type="ordered locus">Tgr7_1232</name>
</gene>
<dbReference type="EMBL" id="CP001339">
    <property type="protein sequence ID" value="ACL72318.1"/>
    <property type="molecule type" value="Genomic_DNA"/>
</dbReference>
<dbReference type="RefSeq" id="WP_012637801.1">
    <property type="nucleotide sequence ID" value="NC_011901.1"/>
</dbReference>
<dbReference type="SMR" id="B8GQC3"/>
<dbReference type="STRING" id="396588.Tgr7_1232"/>
<dbReference type="KEGG" id="tgr:Tgr7_1232"/>
<dbReference type="eggNOG" id="COG0231">
    <property type="taxonomic scope" value="Bacteria"/>
</dbReference>
<dbReference type="HOGENOM" id="CLU_074944_0_0_6"/>
<dbReference type="OrthoDB" id="9801844at2"/>
<dbReference type="UniPathway" id="UPA00345"/>
<dbReference type="Proteomes" id="UP000002383">
    <property type="component" value="Chromosome"/>
</dbReference>
<dbReference type="GO" id="GO:0005737">
    <property type="term" value="C:cytoplasm"/>
    <property type="evidence" value="ECO:0007669"/>
    <property type="project" value="UniProtKB-SubCell"/>
</dbReference>
<dbReference type="GO" id="GO:0003746">
    <property type="term" value="F:translation elongation factor activity"/>
    <property type="evidence" value="ECO:0007669"/>
    <property type="project" value="UniProtKB-UniRule"/>
</dbReference>
<dbReference type="GO" id="GO:0043043">
    <property type="term" value="P:peptide biosynthetic process"/>
    <property type="evidence" value="ECO:0007669"/>
    <property type="project" value="InterPro"/>
</dbReference>
<dbReference type="CDD" id="cd04470">
    <property type="entry name" value="S1_EF-P_repeat_1"/>
    <property type="match status" value="1"/>
</dbReference>
<dbReference type="CDD" id="cd05794">
    <property type="entry name" value="S1_EF-P_repeat_2"/>
    <property type="match status" value="1"/>
</dbReference>
<dbReference type="FunFam" id="2.30.30.30:FF:000003">
    <property type="entry name" value="Elongation factor P"/>
    <property type="match status" value="1"/>
</dbReference>
<dbReference type="FunFam" id="2.40.50.140:FF:000004">
    <property type="entry name" value="Elongation factor P"/>
    <property type="match status" value="1"/>
</dbReference>
<dbReference type="FunFam" id="2.40.50.140:FF:000009">
    <property type="entry name" value="Elongation factor P"/>
    <property type="match status" value="1"/>
</dbReference>
<dbReference type="Gene3D" id="2.30.30.30">
    <property type="match status" value="1"/>
</dbReference>
<dbReference type="Gene3D" id="2.40.50.140">
    <property type="entry name" value="Nucleic acid-binding proteins"/>
    <property type="match status" value="2"/>
</dbReference>
<dbReference type="HAMAP" id="MF_00141">
    <property type="entry name" value="EF_P"/>
    <property type="match status" value="1"/>
</dbReference>
<dbReference type="InterPro" id="IPR015365">
    <property type="entry name" value="Elong-fact-P_C"/>
</dbReference>
<dbReference type="InterPro" id="IPR012340">
    <property type="entry name" value="NA-bd_OB-fold"/>
</dbReference>
<dbReference type="InterPro" id="IPR014722">
    <property type="entry name" value="Rib_uL2_dom2"/>
</dbReference>
<dbReference type="InterPro" id="IPR020599">
    <property type="entry name" value="Transl_elong_fac_P/YeiP"/>
</dbReference>
<dbReference type="InterPro" id="IPR013185">
    <property type="entry name" value="Transl_elong_KOW-like"/>
</dbReference>
<dbReference type="InterPro" id="IPR001059">
    <property type="entry name" value="Transl_elong_P/YeiP_cen"/>
</dbReference>
<dbReference type="InterPro" id="IPR013852">
    <property type="entry name" value="Transl_elong_P/YeiP_CS"/>
</dbReference>
<dbReference type="InterPro" id="IPR011768">
    <property type="entry name" value="Transl_elongation_fac_P"/>
</dbReference>
<dbReference type="InterPro" id="IPR008991">
    <property type="entry name" value="Translation_prot_SH3-like_sf"/>
</dbReference>
<dbReference type="NCBIfam" id="TIGR00038">
    <property type="entry name" value="efp"/>
    <property type="match status" value="1"/>
</dbReference>
<dbReference type="NCBIfam" id="NF001810">
    <property type="entry name" value="PRK00529.1"/>
    <property type="match status" value="1"/>
</dbReference>
<dbReference type="PANTHER" id="PTHR30053">
    <property type="entry name" value="ELONGATION FACTOR P"/>
    <property type="match status" value="1"/>
</dbReference>
<dbReference type="PANTHER" id="PTHR30053:SF12">
    <property type="entry name" value="ELONGATION FACTOR P (EF-P) FAMILY PROTEIN"/>
    <property type="match status" value="1"/>
</dbReference>
<dbReference type="Pfam" id="PF01132">
    <property type="entry name" value="EFP"/>
    <property type="match status" value="1"/>
</dbReference>
<dbReference type="Pfam" id="PF08207">
    <property type="entry name" value="EFP_N"/>
    <property type="match status" value="1"/>
</dbReference>
<dbReference type="Pfam" id="PF09285">
    <property type="entry name" value="Elong-fact-P_C"/>
    <property type="match status" value="1"/>
</dbReference>
<dbReference type="PIRSF" id="PIRSF005901">
    <property type="entry name" value="EF-P"/>
    <property type="match status" value="1"/>
</dbReference>
<dbReference type="SMART" id="SM01185">
    <property type="entry name" value="EFP"/>
    <property type="match status" value="1"/>
</dbReference>
<dbReference type="SMART" id="SM00841">
    <property type="entry name" value="Elong-fact-P_C"/>
    <property type="match status" value="1"/>
</dbReference>
<dbReference type="SUPFAM" id="SSF50249">
    <property type="entry name" value="Nucleic acid-binding proteins"/>
    <property type="match status" value="2"/>
</dbReference>
<dbReference type="SUPFAM" id="SSF50104">
    <property type="entry name" value="Translation proteins SH3-like domain"/>
    <property type="match status" value="1"/>
</dbReference>
<dbReference type="PROSITE" id="PS01275">
    <property type="entry name" value="EFP"/>
    <property type="match status" value="1"/>
</dbReference>
<protein>
    <recommendedName>
        <fullName evidence="1">Elongation factor P</fullName>
        <shortName evidence="1">EF-P</shortName>
    </recommendedName>
</protein>
<evidence type="ECO:0000255" key="1">
    <source>
        <dbReference type="HAMAP-Rule" id="MF_00141"/>
    </source>
</evidence>
<name>EFP_THISH</name>
<proteinExistence type="inferred from homology"/>
<feature type="chain" id="PRO_1000123036" description="Elongation factor P">
    <location>
        <begin position="1"/>
        <end position="187"/>
    </location>
</feature>
<feature type="modified residue" description="N6-(3,6-diaminohexanoyl)-5-hydroxylysine" evidence="1">
    <location>
        <position position="34"/>
    </location>
</feature>